<organism>
    <name type="scientific">Rattus norvegicus</name>
    <name type="common">Rat</name>
    <dbReference type="NCBI Taxonomy" id="10116"/>
    <lineage>
        <taxon>Eukaryota</taxon>
        <taxon>Metazoa</taxon>
        <taxon>Chordata</taxon>
        <taxon>Craniata</taxon>
        <taxon>Vertebrata</taxon>
        <taxon>Euteleostomi</taxon>
        <taxon>Mammalia</taxon>
        <taxon>Eutheria</taxon>
        <taxon>Euarchontoglires</taxon>
        <taxon>Glires</taxon>
        <taxon>Rodentia</taxon>
        <taxon>Myomorpha</taxon>
        <taxon>Muroidea</taxon>
        <taxon>Muridae</taxon>
        <taxon>Murinae</taxon>
        <taxon>Rattus</taxon>
    </lineage>
</organism>
<sequence length="1383" mass="156757">MGSGRGCETTAVPLLMAVAVAGGTAGHLYPGEVCPGMDIRNNLTRLHELENCSVIEGHLQILLMFKTRPEDFRDLSFPKLIMITDYLLLFRVYGLESLKDLFPNLTVIRGSRLFFNYALVIFEMVHLKELGLYNLMNITRGSVRIEKNNELCYLATIDWSRILDYVEDNYIVLNKDDNEECGDVCPGTAKGKTNCPATVINGQFVERCWTHSHCQKVCPTICKSHGCTAEGLCCHKECLGNCSEPDDPTKCVACRNFYLDGQCVETCPPPYYHFQDWRCVNFSFCQDLHYKCRNSRKPGCHQYVIHNNKCIPECPSGYTMNSSNLMCTPCLGPCPKVCQILEGEKTIDSVTSAQELRGCTVINGSLIINIRGGNNLAAELEANLGLIEEISGFLKIRRSYALVSLSFFRKLHLIRGETLEIGNYSFYALDNQNLRQLWDWNKHNLTITQGKLFFHYNPKLCLSEIHKMEEVSGTKGRQERNDIALKTNGDQASCENELLKFSFIRTSFDKILLRWEPYWPPDFRDLLGFMLFYKEAPYQNVTEFDGQDACGSNSWTVVDIDPPQRSNDPKSQTPSHPGWLMRGLKPWTQYAIFVKTLVTFSDERRTYGAKSDIIYVQTDATNPSVPLDPISVSNSSSQIILKWKPPSDPNGNITHYLVYWERQAEDSELFELDYCLKGLKLPSRTWSPPFESDDSQKHNQSEYDDSASECCSCPKTDSQILKELEESSFRKTFEDYLHNVVFVPRKTSSGNGAEDTRPSRKRRSLEEVGNVTATTPTLPDFPNISSTIAPTSHEEHRPFEKVVNKESLVISGLRHFTGYRIELQACNQDSPEERSGVAAYVSARTMPEAKADDIVGPVTHEIFENNVVHLMWQEPKEPNGLIVLYEVSYRRYGDEELHLCVSRKHFALERGCRLRGLSPGNYSVRVRATSLAGNGSWTEPTYFYVTDYLDVPSNIAKIIIGPLIFVFLFSVVIGSIYLFLRKRQPDGPMGPLYASSNPEYLSASDVFPSSVYVPDEWEVPREKITLLRELGQGSFGMVYEGNAKDIIKGEVETRVAVKTVNESASLRERIEFLNEASVMKGFTCHHVVRLLGVVSKGQPTLVVMELMAHGDLKSHLRSLRPDAENNPGRPPPTLQEMIQMTAEIADGMAYLNAKKFVHRDLAARNCMVAHDFTVKIGDFGMTRDIYETDYYRKGGKGLLPVRWMSPESLKDGVFTASSDMWSFGVVLWEITSLAEQPYQGLSNEQVLKFVMDGGYLDPPDNCPERLTDLMRMCWQFNPKMRPTFLEIVNLLKDDLHPSFPEVSFFYSEENKAPESEELEMEFEDMENVPLDRSSHCQREEAGCREGGSSLSIKRTYDEHIPYTHMNGGKKNGRVLTLPRSNPS</sequence>
<reference key="1">
    <citation type="journal article" date="1990" name="Mol. Endocrinol.">
        <title>The rat insulin receptor: primary structure and conservation of tissue-specific alternative messenger RNA splicing.</title>
        <authorList>
            <person name="Goldstein B.J."/>
            <person name="Dudley A.L."/>
        </authorList>
    </citation>
    <scope>NUCLEOTIDE SEQUENCE [MRNA] (ISOFORM LONG)</scope>
    <scope>ALTERNATIVE SPLICING (ISOFORM SHORT)</scope>
</reference>
<reference key="2">
    <citation type="submission" date="1997-05" db="EMBL/GenBank/DDBJ databases">
        <authorList>
            <person name="Liu Y."/>
            <person name="Tam J.W.O."/>
        </authorList>
    </citation>
    <scope>NUCLEOTIDE SEQUENCE [GENOMIC DNA] OF 731-756; 758-819; 969-994 AND 1119-1177</scope>
    <source>
        <strain>Sprague-Dawley</strain>
    </source>
</reference>
<reference key="3">
    <citation type="journal article" date="2000" name="Oncogene">
        <title>Evidence for an interaction between the insulin receptor and Grb7. A role for two of its binding domains, PIR and SH2.</title>
        <authorList>
            <person name="Kasus-Jacobi A."/>
            <person name="Bereziat V."/>
            <person name="Perdereau D."/>
            <person name="Girard J."/>
            <person name="Burnol A.F."/>
        </authorList>
    </citation>
    <scope>INTERACTION WITH GRB7</scope>
</reference>
<reference key="4">
    <citation type="journal article" date="2006" name="Am. J. Physiol.">
        <title>Insulin and IGF-I action on insulin receptors, IGF-I receptors, and hybrid insulin/IGF-I receptors in vascular smooth muscle cells.</title>
        <authorList>
            <person name="Johansson G.S."/>
            <person name="Arnqvist H.J."/>
        </authorList>
    </citation>
    <scope>FUNCTION</scope>
    <scope>FORMATION OF A HYBRID RECEPTOR WITH IGF1R</scope>
</reference>
<reference key="5">
    <citation type="journal article" date="2009" name="J. Cell. Mol. Med.">
        <title>Identification of pY19-caveolin-2 as a positive regulator of insulin-stimulated actin cytoskeleton-dependent mitogenesis.</title>
        <authorList>
            <person name="Kwon H."/>
            <person name="Jeong K."/>
            <person name="Pak Y."/>
        </authorList>
    </citation>
    <scope>INTERACTION WITH CAV2</scope>
</reference>
<reference key="6">
    <citation type="journal article" date="2014" name="Mol. Biol. Cell">
        <title>Structural basis for activation of trimeric Gi proteins by multiple growth factor receptors via GIV/Girdin.</title>
        <authorList>
            <person name="Lin C."/>
            <person name="Ear J."/>
            <person name="Midde K."/>
            <person name="Lopez-Sanchez I."/>
            <person name="Aznar N."/>
            <person name="Garcia-Marcos M."/>
            <person name="Kufareva I."/>
            <person name="Abagyan R."/>
            <person name="Ghosh P."/>
        </authorList>
    </citation>
    <scope>INTERACTION WITH CCDC88A AND GNAI3</scope>
</reference>
<reference key="7">
    <citation type="journal article" date="2015" name="Mol. Cell. Proteomics">
        <title>The last enzyme of the de novo purine synthesis pathway 5-aminoimidazole-4-carboxamide ribonucleotide formyltransferase/IMP cyclohydrolase (ATIC) plays a central role in insulin signaling and the Golgi/endosomes protein network.</title>
        <authorList>
            <person name="Boutchueng-Djidjou M."/>
            <person name="Collard-Simard G."/>
            <person name="Fortier S."/>
            <person name="Hebert S.S."/>
            <person name="Kelly I."/>
            <person name="Landry C.R."/>
            <person name="Faure R.L."/>
        </authorList>
    </citation>
    <scope>INTERACTION WITH ATIC</scope>
</reference>
<name>INSR_RAT</name>
<comment type="function">
    <text evidence="1 3 10">Receptor tyrosine kinase which mediates the pleiotropic actions of insulin. Binding of insulin leads to phosphorylation of several intracellular substrates, including, insulin receptor substrates (IRS1, 2, 3, 4), SHC, GAB1, CBL and other signaling intermediates. Each of these phosphorylated proteins serve as docking proteins for other signaling proteins that contain Src-homology-2 domains (SH2 domain) that specifically recognize different phosphotyrosine residues, including the p85 regulatory subunit of PI3K and SHP2. Phosphorylation of IRSs proteins lead to the activation of two main signaling pathways: the PI3K-AKT/PKB pathway, which is responsible for most of the metabolic actions of insulin, and the Ras-MAPK pathway, which regulates expression of some genes and cooperates with the PI3K pathway to control cell growth and differentiation. Binding of the SH2 domains of PI3K to phosphotyrosines on IRS1 leads to the activation of PI3K and the generation of phosphatidylinositol-(3, 4, 5)-triphosphate (PIP3), a lipid second messenger, which activates several PIP3-dependent serine/threonine kinases, such as PDPK1 and subsequently AKT/PKB. The net effect of this pathway is to produce a translocation of the glucose transporter SLC2A4/GLUT4 from cytoplasmic vesicles to the cell membrane to facilitate glucose transport. Moreover, upon insulin stimulation, activated AKT/PKB is responsible for: anti-apoptotic effect of insulin by inducing phosphorylation of BAD; regulates the expression of gluconeogenic and lipogenic enzymes by controlling the activity of the winged helix or forkhead (FOX) class of transcription factors. Another pathway regulated by PI3K-AKT/PKB activation is mTORC1 signaling pathway which regulates cell growth and metabolism and integrates signals from insulin. AKT mediates insulin-stimulated protein synthesis by phosphorylating TSC2 thereby activating mTORC1 pathway. The Ras/RAF/MAP2K/MAPK pathway is mainly involved in mediating cell growth, survival and cellular differentiation of insulin. Phosphorylated IRS1 recruits GRB2/SOS complex, which triggers the activation of the Ras/RAF/MAP2K/MAPK pathway. In addition to binding insulin, the insulin receptor can bind insulin-like growth factors (IGFI and IGFII). When present in a hybrid receptor with IGF1R, binds IGF1 (By similarity). In adipocytes, inhibits lipolysis (By similarity).</text>
</comment>
<comment type="catalytic activity">
    <reaction evidence="7">
        <text>L-tyrosyl-[protein] + ATP = O-phospho-L-tyrosyl-[protein] + ADP + H(+)</text>
        <dbReference type="Rhea" id="RHEA:10596"/>
        <dbReference type="Rhea" id="RHEA-COMP:10136"/>
        <dbReference type="Rhea" id="RHEA-COMP:20101"/>
        <dbReference type="ChEBI" id="CHEBI:15378"/>
        <dbReference type="ChEBI" id="CHEBI:30616"/>
        <dbReference type="ChEBI" id="CHEBI:46858"/>
        <dbReference type="ChEBI" id="CHEBI:61978"/>
        <dbReference type="ChEBI" id="CHEBI:456216"/>
        <dbReference type="EC" id="2.7.10.1"/>
    </reaction>
</comment>
<comment type="activity regulation">
    <text evidence="1">Activated in response to insulin. Autophosphorylation activates the kinase activity. PTPN1, PTPRE and PTPRF dephosphorylate important tyrosine residues, thereby reducing INSR activity. Inhibited by ENPP1. GRB10 and GRB14 inhibit the catalytic activity of the INSR, they block access of substrates to the activated receptor. SOCS1 and SOCS3 act as negative regulators of INSR activity, they bind to the activated INRS and interfere with the phosphorylation of INSR substrates (By similarity).</text>
</comment>
<comment type="subunit">
    <text evidence="1 2 3 9 11 12 13">Tetramer of 2 alpha and 2 beta chains linked by disulfide bonds. The alpha chains carry the insulin-binding regions, while the beta chains carry the kinase domain. Forms a hybrid receptor with IGF1R, the hybrid is a tetramer consisting of 1 alpha chain and 1 beta chain of INSR and 1 alpha chain and 1 beta chain of IGF1R. Interacts with SORBS1 but dissociates from it following insulin stimulation. Binds SH2B2. Activated form of INSR interacts (via Tyr-1000) with the PTB/PID domains of IRS1 and SHC1. The sequences surrounding the phosphorylated NPXY motif contribute differentially to either IRS1 or SHC1 recognition. Interacts (via tyrosines in the C-terminus) with IRS2 (via PTB domain and 591-786 AA); the 591-786 would be the primary anchor of IRS2 to INSR while the PTB domain would have a stabilizing action on the interaction with INSR. Interacts with the SH2 domains of the 85 kDa regulatory subunit of PI3K (PIK3R1) in vitro, when autophosphorylated on tyrosine residues. Interacts with SOCS7. Interacts (via the phosphorylated Tyr-1000), with SOCS3. Interacts (via the phosphorylated Tyr-1186, Tyr-1190, Tyr-1191) with SOCS1. Interacts with ARRB2 (By similarity). Interacts with GRB10; this interaction blocks the association between IRS1/IRS2 and INSR, significantly reduces insulin-stimulated tyrosine phosphorylation of IRS1 and IRS2 and thus decreases insulin signaling. Interacts with PDPK1. Interacts (via Tyr-1191) with GRB14 (via BPS domain); this interaction protects the tyrosines in the activation loop from dephosphorylation, but promotes dephosphorylation of Tyr-1000, this results in decreased interaction with, and phosphorylation of, IRS1. Interacts (via subunit alpha) with ENPP1 (via 485-599 AA); this interaction blocks autophosphorylation. Interacts with PTPRE; this interaction is dependent of Tyr-1186, Tyr-1190 and Tyr-1191 of the INSR. Interacts with STAT5B (via SH2 domain). Interacts with PTPRF (By similarity). Interacts with GRB7. Interacts with CAV2 (tyrosine-phosphorylated form); the interaction is increased with 'Tyr-27'phosphorylation of CAV2. Interacts with ATIC; ATIC together with PRKAA2/AMPK2 and HACD3/PTPLAD1 is proposed to be part of a signaling netwok regulating INSR autophosphorylation and endocytosis (PubMed:25687571). Interacts with the insulin receptor SORL1; this interaction strongly increases its surface exposure, hence strengthens insulin signal reception (By similarity). Interacts (tyrosine phosphorylated) with CCDC88A/GIV (via SH2-like region); binding requires autophosphorylation of the Insr C-terminal region (PubMed:25187647). Interacts with GNAI3; the interaction is probably mediated by CCDC88A/GIV (PubMed:25187647). Interacts with LMBRD1 (By similarity). Interacts (in response to insulin stimulation) with NCK1; this interaction may recruit PTPN1 to mediate INSR dephosphorylation (By similarity). Interacts with CD248; this interaction diminishes INSR autophosphorylation (By similarity).</text>
</comment>
<comment type="interaction">
    <interactant intactId="EBI-7472166">
        <id>P15127</id>
    </interactant>
    <interactant intactId="EBI-8656708">
        <id>Q62689</id>
        <label>Jak2</label>
    </interactant>
    <organismsDiffer>false</organismsDiffer>
    <experiments>2</experiments>
</comment>
<comment type="interaction">
    <interactant intactId="EBI-10768746">
        <id>PRO_0000016698</id>
    </interactant>
    <interactant intactId="EBI-10768817">
        <id>O35567</id>
        <label>Atic</label>
    </interactant>
    <organismsDiffer>false</organismsDiffer>
    <experiments>3</experiments>
</comment>
<comment type="subcellular location">
    <subcellularLocation>
        <location evidence="3">Cell membrane</location>
        <topology evidence="14">Single-pass type I membrane protein</topology>
    </subcellularLocation>
    <subcellularLocation>
        <location evidence="3">Late endosome</location>
    </subcellularLocation>
    <subcellularLocation>
        <location evidence="3">Lysosome</location>
    </subcellularLocation>
    <text evidence="3">Binding of insulin to INSR induces internalization and lysosomal degradation of the receptor, a means for down-regulating this signaling pathway after stimulation. In the presence of SORL1, internalized INSR molecules are redirected back to the cell surface, thereby preventing their lysosomal catabolism and strengthening insulin signal reception.</text>
</comment>
<comment type="alternative products">
    <event type="alternative splicing"/>
    <isoform>
        <id>P15127-1</id>
        <name>Long</name>
        <name>RIR-B</name>
        <sequence type="displayed"/>
    </isoform>
    <isoform>
        <id>P15127-2</id>
        <name>Short</name>
        <name>RIR-A</name>
        <sequence type="described" ref="VSP_036680"/>
    </isoform>
</comment>
<comment type="domain">
    <text evidence="1">The tetrameric insulin receptor binds insulin via non-identical regions from two alpha chains, primarily via the C-terminal region of the first INSR alpha chain. Residues from the leucine-rich N-terminus of the other INSR alpha chain also contribute to this insulin binding site. A secondary insulin-binding site is formed by residues at the junction of fibronectin type-III domain 1 and 2 (By similarity).</text>
</comment>
<comment type="PTM">
    <text evidence="2">After being transported from the endoplasmic reticulum to the Golgi apparatus, the single glycosylated precursor is further glycosylated and then cleaved, followed by its transport to the plasma membrane.</text>
</comment>
<comment type="PTM">
    <text evidence="2">Autophosphorylated on tyrosine residues in response to insulin. Phosphorylation of Tyr-1000 is required for binding to IRS1, SHC1 and STAT5B. May also be phosphorylated at Tyr-1186 and Tyr-1191 by mTORC2. Dephosphorylated by PTPRE at Tyr-1000, Tyr-1186, Tyr-1190 and Tyr-1191. Dephosphorylated by PTPRF and PTPN1. Dephosphorylated by PTPN2; down-regulates insulin-induced signaling.</text>
</comment>
<comment type="PTM">
    <text evidence="2">S-nitrosylation at Cys-1084 by BLVRB inhibits the receptor tyrosine kinase, thereby inhibiting insulin signaling.</text>
</comment>
<comment type="PTM">
    <text evidence="2">Ubiquitinated by MARCHF1; leading to degradation thereby reducing surface INSR expression.</text>
</comment>
<comment type="similarity">
    <text evidence="5">Belongs to the protein kinase superfamily. Tyr protein kinase family. Insulin receptor subfamily.</text>
</comment>
<evidence type="ECO:0000250" key="1"/>
<evidence type="ECO:0000250" key="2">
    <source>
        <dbReference type="UniProtKB" id="P06213"/>
    </source>
</evidence>
<evidence type="ECO:0000250" key="3">
    <source>
        <dbReference type="UniProtKB" id="P15208"/>
    </source>
</evidence>
<evidence type="ECO:0000255" key="4"/>
<evidence type="ECO:0000255" key="5">
    <source>
        <dbReference type="PROSITE-ProRule" id="PRU00159"/>
    </source>
</evidence>
<evidence type="ECO:0000255" key="6">
    <source>
        <dbReference type="PROSITE-ProRule" id="PRU00316"/>
    </source>
</evidence>
<evidence type="ECO:0000255" key="7">
    <source>
        <dbReference type="PROSITE-ProRule" id="PRU10028"/>
    </source>
</evidence>
<evidence type="ECO:0000256" key="8">
    <source>
        <dbReference type="SAM" id="MobiDB-lite"/>
    </source>
</evidence>
<evidence type="ECO:0000269" key="9">
    <source>
    </source>
</evidence>
<evidence type="ECO:0000269" key="10">
    <source>
    </source>
</evidence>
<evidence type="ECO:0000269" key="11">
    <source>
    </source>
</evidence>
<evidence type="ECO:0000269" key="12">
    <source>
    </source>
</evidence>
<evidence type="ECO:0000269" key="13">
    <source>
    </source>
</evidence>
<evidence type="ECO:0000305" key="14"/>
<evidence type="ECO:0007829" key="15">
    <source>
        <dbReference type="PDB" id="4XST"/>
    </source>
</evidence>
<accession>P15127</accession>
<accession>P97681</accession>
<proteinExistence type="evidence at protein level"/>
<gene>
    <name type="primary">Insr</name>
</gene>
<keyword id="KW-0002">3D-structure</keyword>
<keyword id="KW-0025">Alternative splicing</keyword>
<keyword id="KW-0067">ATP-binding</keyword>
<keyword id="KW-0119">Carbohydrate metabolism</keyword>
<keyword id="KW-1003">Cell membrane</keyword>
<keyword id="KW-0165">Cleavage on pair of basic residues</keyword>
<keyword id="KW-1015">Disulfide bond</keyword>
<keyword id="KW-0967">Endosome</keyword>
<keyword id="KW-0325">Glycoprotein</keyword>
<keyword id="KW-1017">Isopeptide bond</keyword>
<keyword id="KW-0418">Kinase</keyword>
<keyword id="KW-0458">Lysosome</keyword>
<keyword id="KW-0472">Membrane</keyword>
<keyword id="KW-0547">Nucleotide-binding</keyword>
<keyword id="KW-0597">Phosphoprotein</keyword>
<keyword id="KW-0675">Receptor</keyword>
<keyword id="KW-1185">Reference proteome</keyword>
<keyword id="KW-0677">Repeat</keyword>
<keyword id="KW-0702">S-nitrosylation</keyword>
<keyword id="KW-0732">Signal</keyword>
<keyword id="KW-0808">Transferase</keyword>
<keyword id="KW-0812">Transmembrane</keyword>
<keyword id="KW-1133">Transmembrane helix</keyword>
<keyword id="KW-0829">Tyrosine-protein kinase</keyword>
<keyword id="KW-0832">Ubl conjugation</keyword>
<dbReference type="EC" id="2.7.10.1"/>
<dbReference type="EMBL" id="M29014">
    <property type="protein sequence ID" value="AAA41441.1"/>
    <property type="molecule type" value="mRNA"/>
</dbReference>
<dbReference type="EMBL" id="AF005776">
    <property type="protein sequence ID" value="AAB61414.1"/>
    <property type="molecule type" value="Genomic_DNA"/>
</dbReference>
<dbReference type="EMBL" id="AF005777">
    <property type="protein sequence ID" value="AAB61415.1"/>
    <property type="molecule type" value="Genomic_DNA"/>
</dbReference>
<dbReference type="EMBL" id="AH004882">
    <property type="protein sequence ID" value="AAB38967.1"/>
    <property type="molecule type" value="Genomic_DNA"/>
</dbReference>
<dbReference type="EMBL" id="AH004883">
    <property type="protein sequence ID" value="AAB38968.1"/>
    <property type="molecule type" value="Genomic_DNA"/>
</dbReference>
<dbReference type="EMBL" id="U80633">
    <property type="protein sequence ID" value="AAB38746.1"/>
    <property type="molecule type" value="Genomic_DNA"/>
</dbReference>
<dbReference type="PIR" id="A36080">
    <property type="entry name" value="A36080"/>
</dbReference>
<dbReference type="PDB" id="4XST">
    <property type="method" value="X-ray"/>
    <property type="resolution" value="3.00 A"/>
    <property type="chains" value="F=726-748"/>
</dbReference>
<dbReference type="PDB" id="5TQ1">
    <property type="method" value="X-ray"/>
    <property type="resolution" value="1.49 A"/>
    <property type="chains" value="B=1008-1018"/>
</dbReference>
<dbReference type="PDBsum" id="4XST"/>
<dbReference type="PDBsum" id="5TQ1"/>
<dbReference type="BMRB" id="P15127"/>
<dbReference type="SMR" id="P15127"/>
<dbReference type="DIP" id="DIP-42209N"/>
<dbReference type="FunCoup" id="P15127">
    <property type="interactions" value="1262"/>
</dbReference>
<dbReference type="IntAct" id="P15127">
    <property type="interactions" value="454"/>
</dbReference>
<dbReference type="MINT" id="P15127"/>
<dbReference type="STRING" id="10116.ENSRNOP00000049655"/>
<dbReference type="BindingDB" id="P15127"/>
<dbReference type="ChEMBL" id="CHEMBL5486"/>
<dbReference type="DrugCentral" id="P15127"/>
<dbReference type="GlyCosmos" id="P15127">
    <property type="glycosylation" value="18 sites, 5 glycans"/>
</dbReference>
<dbReference type="GlyGen" id="P15127">
    <property type="glycosylation" value="18 sites, 5 N-linked glycans (1 site)"/>
</dbReference>
<dbReference type="iPTMnet" id="P15127"/>
<dbReference type="PhosphoSitePlus" id="P15127"/>
<dbReference type="PaxDb" id="10116-ENSRNOP00000060141"/>
<dbReference type="PeptideAtlas" id="P15127"/>
<dbReference type="UCSC" id="RGD:2917">
    <molecule id="P15127-1"/>
    <property type="organism name" value="rat"/>
</dbReference>
<dbReference type="AGR" id="RGD:2917"/>
<dbReference type="RGD" id="2917">
    <property type="gene designation" value="Insr"/>
</dbReference>
<dbReference type="eggNOG" id="KOG4258">
    <property type="taxonomic scope" value="Eukaryota"/>
</dbReference>
<dbReference type="InParanoid" id="P15127"/>
<dbReference type="PhylomeDB" id="P15127"/>
<dbReference type="BRENDA" id="2.7.10.1">
    <property type="organism ID" value="5301"/>
</dbReference>
<dbReference type="Reactome" id="R-RNO-6811558">
    <property type="pathway name" value="PI5P, PP2A and IER3 Regulate PI3K/AKT Signaling"/>
</dbReference>
<dbReference type="Reactome" id="R-RNO-74713">
    <property type="pathway name" value="IRS activation"/>
</dbReference>
<dbReference type="Reactome" id="R-RNO-74749">
    <property type="pathway name" value="Signal attenuation"/>
</dbReference>
<dbReference type="Reactome" id="R-RNO-74751">
    <property type="pathway name" value="Insulin receptor signalling cascade"/>
</dbReference>
<dbReference type="Reactome" id="R-RNO-74752">
    <property type="pathway name" value="Signaling by Insulin receptor"/>
</dbReference>
<dbReference type="Reactome" id="R-RNO-77387">
    <property type="pathway name" value="Insulin receptor recycling"/>
</dbReference>
<dbReference type="PRO" id="PR:P15127"/>
<dbReference type="Proteomes" id="UP000002494">
    <property type="component" value="Unplaced"/>
</dbReference>
<dbReference type="GO" id="GO:0030424">
    <property type="term" value="C:axon"/>
    <property type="evidence" value="ECO:0000318"/>
    <property type="project" value="GO_Central"/>
</dbReference>
<dbReference type="GO" id="GO:0005901">
    <property type="term" value="C:caveola"/>
    <property type="evidence" value="ECO:0000266"/>
    <property type="project" value="RGD"/>
</dbReference>
<dbReference type="GO" id="GO:0032590">
    <property type="term" value="C:dendrite membrane"/>
    <property type="evidence" value="ECO:0000314"/>
    <property type="project" value="ARUK-UCL"/>
</dbReference>
<dbReference type="GO" id="GO:0005768">
    <property type="term" value="C:endosome"/>
    <property type="evidence" value="ECO:0000314"/>
    <property type="project" value="RGD"/>
</dbReference>
<dbReference type="GO" id="GO:0009897">
    <property type="term" value="C:external side of plasma membrane"/>
    <property type="evidence" value="ECO:0000314"/>
    <property type="project" value="ARUK-UCL"/>
</dbReference>
<dbReference type="GO" id="GO:0005899">
    <property type="term" value="C:insulin receptor complex"/>
    <property type="evidence" value="ECO:0000266"/>
    <property type="project" value="RGD"/>
</dbReference>
<dbReference type="GO" id="GO:0005770">
    <property type="term" value="C:late endosome"/>
    <property type="evidence" value="ECO:0007669"/>
    <property type="project" value="UniProtKB-SubCell"/>
</dbReference>
<dbReference type="GO" id="GO:0005764">
    <property type="term" value="C:lysosome"/>
    <property type="evidence" value="ECO:0007669"/>
    <property type="project" value="UniProtKB-SubCell"/>
</dbReference>
<dbReference type="GO" id="GO:0016020">
    <property type="term" value="C:membrane"/>
    <property type="evidence" value="ECO:0000266"/>
    <property type="project" value="RGD"/>
</dbReference>
<dbReference type="GO" id="GO:0043025">
    <property type="term" value="C:neuronal cell body"/>
    <property type="evidence" value="ECO:0000314"/>
    <property type="project" value="RGD"/>
</dbReference>
<dbReference type="GO" id="GO:0032809">
    <property type="term" value="C:neuronal cell body membrane"/>
    <property type="evidence" value="ECO:0000314"/>
    <property type="project" value="ARUK-UCL"/>
</dbReference>
<dbReference type="GO" id="GO:0005635">
    <property type="term" value="C:nuclear envelope"/>
    <property type="evidence" value="ECO:0000266"/>
    <property type="project" value="RGD"/>
</dbReference>
<dbReference type="GO" id="GO:0031981">
    <property type="term" value="C:nuclear lumen"/>
    <property type="evidence" value="ECO:0000266"/>
    <property type="project" value="RGD"/>
</dbReference>
<dbReference type="GO" id="GO:0005886">
    <property type="term" value="C:plasma membrane"/>
    <property type="evidence" value="ECO:0000266"/>
    <property type="project" value="RGD"/>
</dbReference>
<dbReference type="GO" id="GO:0043235">
    <property type="term" value="C:receptor complex"/>
    <property type="evidence" value="ECO:0000266"/>
    <property type="project" value="RGD"/>
</dbReference>
<dbReference type="GO" id="GO:0060417">
    <property type="term" value="C:yolk"/>
    <property type="evidence" value="ECO:0000314"/>
    <property type="project" value="RGD"/>
</dbReference>
<dbReference type="GO" id="GO:0043423">
    <property type="term" value="F:3-phosphoinositide-dependent protein kinase binding"/>
    <property type="evidence" value="ECO:0000314"/>
    <property type="project" value="RGD"/>
</dbReference>
<dbReference type="GO" id="GO:0001540">
    <property type="term" value="F:amyloid-beta binding"/>
    <property type="evidence" value="ECO:0000266"/>
    <property type="project" value="RGD"/>
</dbReference>
<dbReference type="GO" id="GO:0005524">
    <property type="term" value="F:ATP binding"/>
    <property type="evidence" value="ECO:0000266"/>
    <property type="project" value="RGD"/>
</dbReference>
<dbReference type="GO" id="GO:0038024">
    <property type="term" value="F:cargo receptor activity"/>
    <property type="evidence" value="ECO:0000315"/>
    <property type="project" value="ARUK-UCL"/>
</dbReference>
<dbReference type="GO" id="GO:0005525">
    <property type="term" value="F:GTP binding"/>
    <property type="evidence" value="ECO:0000266"/>
    <property type="project" value="RGD"/>
</dbReference>
<dbReference type="GO" id="GO:0043559">
    <property type="term" value="F:insulin binding"/>
    <property type="evidence" value="ECO:0000314"/>
    <property type="project" value="RGD"/>
</dbReference>
<dbReference type="GO" id="GO:0005009">
    <property type="term" value="F:insulin receptor activity"/>
    <property type="evidence" value="ECO:0000314"/>
    <property type="project" value="RGD"/>
</dbReference>
<dbReference type="GO" id="GO:0043560">
    <property type="term" value="F:insulin receptor substrate binding"/>
    <property type="evidence" value="ECO:0000315"/>
    <property type="project" value="RGD"/>
</dbReference>
<dbReference type="GO" id="GO:0031994">
    <property type="term" value="F:insulin-like growth factor I binding"/>
    <property type="evidence" value="ECO:0000266"/>
    <property type="project" value="RGD"/>
</dbReference>
<dbReference type="GO" id="GO:0031995">
    <property type="term" value="F:insulin-like growth factor II binding"/>
    <property type="evidence" value="ECO:0000266"/>
    <property type="project" value="RGD"/>
</dbReference>
<dbReference type="GO" id="GO:0005159">
    <property type="term" value="F:insulin-like growth factor receptor binding"/>
    <property type="evidence" value="ECO:0000266"/>
    <property type="project" value="RGD"/>
</dbReference>
<dbReference type="GO" id="GO:0031405">
    <property type="term" value="F:lipoic acid binding"/>
    <property type="evidence" value="ECO:0000353"/>
    <property type="project" value="RGD"/>
</dbReference>
<dbReference type="GO" id="GO:0043548">
    <property type="term" value="F:phosphatidylinositol 3-kinase binding"/>
    <property type="evidence" value="ECO:0000266"/>
    <property type="project" value="RGD"/>
</dbReference>
<dbReference type="GO" id="GO:0019904">
    <property type="term" value="F:protein domain specific binding"/>
    <property type="evidence" value="ECO:0000353"/>
    <property type="project" value="RGD"/>
</dbReference>
<dbReference type="GO" id="GO:0030295">
    <property type="term" value="F:protein kinase activator activity"/>
    <property type="evidence" value="ECO:0000266"/>
    <property type="project" value="RGD"/>
</dbReference>
<dbReference type="GO" id="GO:0004672">
    <property type="term" value="F:protein kinase activity"/>
    <property type="evidence" value="ECO:0000314"/>
    <property type="project" value="RGD"/>
</dbReference>
<dbReference type="GO" id="GO:0019901">
    <property type="term" value="F:protein kinase binding"/>
    <property type="evidence" value="ECO:0000353"/>
    <property type="project" value="RGD"/>
</dbReference>
<dbReference type="GO" id="GO:0019903">
    <property type="term" value="F:protein phosphatase binding"/>
    <property type="evidence" value="ECO:0000315"/>
    <property type="project" value="RGD"/>
</dbReference>
<dbReference type="GO" id="GO:0004713">
    <property type="term" value="F:protein tyrosine kinase activity"/>
    <property type="evidence" value="ECO:0000314"/>
    <property type="project" value="RGD"/>
</dbReference>
<dbReference type="GO" id="GO:0044877">
    <property type="term" value="F:protein-containing complex binding"/>
    <property type="evidence" value="ECO:0000353"/>
    <property type="project" value="RGD"/>
</dbReference>
<dbReference type="GO" id="GO:0051425">
    <property type="term" value="F:PTB domain binding"/>
    <property type="evidence" value="ECO:0000266"/>
    <property type="project" value="RGD"/>
</dbReference>
<dbReference type="GO" id="GO:0005198">
    <property type="term" value="F:structural molecule activity"/>
    <property type="evidence" value="ECO:0000266"/>
    <property type="project" value="RGD"/>
</dbReference>
<dbReference type="GO" id="GO:0030325">
    <property type="term" value="P:adrenal gland development"/>
    <property type="evidence" value="ECO:0000266"/>
    <property type="project" value="RGD"/>
</dbReference>
<dbReference type="GO" id="GO:0097242">
    <property type="term" value="P:amyloid-beta clearance"/>
    <property type="evidence" value="ECO:0000315"/>
    <property type="project" value="ARUK-UCL"/>
</dbReference>
<dbReference type="GO" id="GO:0009887">
    <property type="term" value="P:animal organ morphogenesis"/>
    <property type="evidence" value="ECO:0000266"/>
    <property type="project" value="RGD"/>
</dbReference>
<dbReference type="GO" id="GO:0071363">
    <property type="term" value="P:cellular response to growth factor stimulus"/>
    <property type="evidence" value="ECO:0000266"/>
    <property type="project" value="RGD"/>
</dbReference>
<dbReference type="GO" id="GO:0032869">
    <property type="term" value="P:cellular response to insulin stimulus"/>
    <property type="evidence" value="ECO:0000266"/>
    <property type="project" value="RGD"/>
</dbReference>
<dbReference type="GO" id="GO:0034224">
    <property type="term" value="P:cellular response to zinc ion starvation"/>
    <property type="evidence" value="ECO:0000270"/>
    <property type="project" value="RGD"/>
</dbReference>
<dbReference type="GO" id="GO:0021549">
    <property type="term" value="P:cerebellum development"/>
    <property type="evidence" value="ECO:0000270"/>
    <property type="project" value="RGD"/>
</dbReference>
<dbReference type="GO" id="GO:0097062">
    <property type="term" value="P:dendritic spine maintenance"/>
    <property type="evidence" value="ECO:0000316"/>
    <property type="project" value="ARUK-UCL"/>
</dbReference>
<dbReference type="GO" id="GO:1990402">
    <property type="term" value="P:embryonic liver development"/>
    <property type="evidence" value="ECO:0000270"/>
    <property type="project" value="RGD"/>
</dbReference>
<dbReference type="GO" id="GO:0008544">
    <property type="term" value="P:epidermis development"/>
    <property type="evidence" value="ECO:0000266"/>
    <property type="project" value="RGD"/>
</dbReference>
<dbReference type="GO" id="GO:0031017">
    <property type="term" value="P:exocrine pancreas development"/>
    <property type="evidence" value="ECO:0000266"/>
    <property type="project" value="RGD"/>
</dbReference>
<dbReference type="GO" id="GO:0045444">
    <property type="term" value="P:fat cell differentiation"/>
    <property type="evidence" value="ECO:0000270"/>
    <property type="project" value="RGD"/>
</dbReference>
<dbReference type="GO" id="GO:0007186">
    <property type="term" value="P:G protein-coupled receptor signaling pathway"/>
    <property type="evidence" value="ECO:0000266"/>
    <property type="project" value="RGD"/>
</dbReference>
<dbReference type="GO" id="GO:0042593">
    <property type="term" value="P:glucose homeostasis"/>
    <property type="evidence" value="ECO:0000266"/>
    <property type="project" value="RGD"/>
</dbReference>
<dbReference type="GO" id="GO:0003007">
    <property type="term" value="P:heart morphogenesis"/>
    <property type="evidence" value="ECO:0000266"/>
    <property type="project" value="RGD"/>
</dbReference>
<dbReference type="GO" id="GO:0021766">
    <property type="term" value="P:hippocampus development"/>
    <property type="evidence" value="ECO:0000270"/>
    <property type="project" value="RGD"/>
</dbReference>
<dbReference type="GO" id="GO:0008286">
    <property type="term" value="P:insulin receptor signaling pathway"/>
    <property type="evidence" value="ECO:0000314"/>
    <property type="project" value="RGD"/>
</dbReference>
<dbReference type="GO" id="GO:0001889">
    <property type="term" value="P:liver development"/>
    <property type="evidence" value="ECO:0000270"/>
    <property type="project" value="RGD"/>
</dbReference>
<dbReference type="GO" id="GO:0097421">
    <property type="term" value="P:liver regeneration"/>
    <property type="evidence" value="ECO:0000270"/>
    <property type="project" value="RGD"/>
</dbReference>
<dbReference type="GO" id="GO:0008584">
    <property type="term" value="P:male gonad development"/>
    <property type="evidence" value="ECO:0000266"/>
    <property type="project" value="RGD"/>
</dbReference>
<dbReference type="GO" id="GO:0030238">
    <property type="term" value="P:male sex determination"/>
    <property type="evidence" value="ECO:0000266"/>
    <property type="project" value="RGD"/>
</dbReference>
<dbReference type="GO" id="GO:2000252">
    <property type="term" value="P:negative regulation of feeding behavior"/>
    <property type="evidence" value="ECO:0000315"/>
    <property type="project" value="RGD"/>
</dbReference>
<dbReference type="GO" id="GO:0010629">
    <property type="term" value="P:negative regulation of gene expression"/>
    <property type="evidence" value="ECO:0000315"/>
    <property type="project" value="RGD"/>
</dbReference>
<dbReference type="GO" id="GO:0045719">
    <property type="term" value="P:negative regulation of glycogen biosynthetic process"/>
    <property type="evidence" value="ECO:0000270"/>
    <property type="project" value="RGD"/>
</dbReference>
<dbReference type="GO" id="GO:1990535">
    <property type="term" value="P:neuron projection maintenance"/>
    <property type="evidence" value="ECO:0000316"/>
    <property type="project" value="ARUK-UCL"/>
</dbReference>
<dbReference type="GO" id="GO:0043123">
    <property type="term" value="P:positive regulation of canonical NF-kappaB signal transduction"/>
    <property type="evidence" value="ECO:0000266"/>
    <property type="project" value="RGD"/>
</dbReference>
<dbReference type="GO" id="GO:0030335">
    <property type="term" value="P:positive regulation of cell migration"/>
    <property type="evidence" value="ECO:0000266"/>
    <property type="project" value="RGD"/>
</dbReference>
<dbReference type="GO" id="GO:0008284">
    <property type="term" value="P:positive regulation of cell population proliferation"/>
    <property type="evidence" value="ECO:0000266"/>
    <property type="project" value="RGD"/>
</dbReference>
<dbReference type="GO" id="GO:0046326">
    <property type="term" value="P:positive regulation of D-glucose import"/>
    <property type="evidence" value="ECO:0000266"/>
    <property type="project" value="RGD"/>
</dbReference>
<dbReference type="GO" id="GO:0048639">
    <property type="term" value="P:positive regulation of developmental growth"/>
    <property type="evidence" value="ECO:0000266"/>
    <property type="project" value="RGD"/>
</dbReference>
<dbReference type="GO" id="GO:0045893">
    <property type="term" value="P:positive regulation of DNA-templated transcription"/>
    <property type="evidence" value="ECO:0000266"/>
    <property type="project" value="RGD"/>
</dbReference>
<dbReference type="GO" id="GO:0045725">
    <property type="term" value="P:positive regulation of glycogen biosynthetic process"/>
    <property type="evidence" value="ECO:0000266"/>
    <property type="project" value="RGD"/>
</dbReference>
<dbReference type="GO" id="GO:0045821">
    <property type="term" value="P:positive regulation of glycolytic process"/>
    <property type="evidence" value="ECO:0000266"/>
    <property type="project" value="RGD"/>
</dbReference>
<dbReference type="GO" id="GO:0010560">
    <property type="term" value="P:positive regulation of glycoprotein biosynthetic process"/>
    <property type="evidence" value="ECO:0000315"/>
    <property type="project" value="RGD"/>
</dbReference>
<dbReference type="GO" id="GO:0043410">
    <property type="term" value="P:positive regulation of MAPK cascade"/>
    <property type="evidence" value="ECO:0000266"/>
    <property type="project" value="RGD"/>
</dbReference>
<dbReference type="GO" id="GO:0051446">
    <property type="term" value="P:positive regulation of meiotic cell cycle"/>
    <property type="evidence" value="ECO:0000266"/>
    <property type="project" value="RGD"/>
</dbReference>
<dbReference type="GO" id="GO:0045840">
    <property type="term" value="P:positive regulation of mitotic nuclear division"/>
    <property type="evidence" value="ECO:0000266"/>
    <property type="project" value="RGD"/>
</dbReference>
<dbReference type="GO" id="GO:0045429">
    <property type="term" value="P:positive regulation of nitric oxide biosynthetic process"/>
    <property type="evidence" value="ECO:0000266"/>
    <property type="project" value="RGD"/>
</dbReference>
<dbReference type="GO" id="GO:0051897">
    <property type="term" value="P:positive regulation of phosphatidylinositol 3-kinase/protein kinase B signal transduction"/>
    <property type="evidence" value="ECO:0000266"/>
    <property type="project" value="RGD"/>
</dbReference>
<dbReference type="GO" id="GO:0042327">
    <property type="term" value="P:positive regulation of phosphorylation"/>
    <property type="evidence" value="ECO:0000314"/>
    <property type="project" value="BHF-UCL"/>
</dbReference>
<dbReference type="GO" id="GO:0043243">
    <property type="term" value="P:positive regulation of protein-containing complex disassembly"/>
    <property type="evidence" value="ECO:0000316"/>
    <property type="project" value="ARUK-UCL"/>
</dbReference>
<dbReference type="GO" id="GO:0002092">
    <property type="term" value="P:positive regulation of receptor internalization"/>
    <property type="evidence" value="ECO:0000266"/>
    <property type="project" value="RGD"/>
</dbReference>
<dbReference type="GO" id="GO:0060267">
    <property type="term" value="P:positive regulation of respiratory burst"/>
    <property type="evidence" value="ECO:0000266"/>
    <property type="project" value="RGD"/>
</dbReference>
<dbReference type="GO" id="GO:0031623">
    <property type="term" value="P:receptor internalization"/>
    <property type="evidence" value="ECO:0000266"/>
    <property type="project" value="RGD"/>
</dbReference>
<dbReference type="GO" id="GO:0006898">
    <property type="term" value="P:receptor-mediated endocytosis"/>
    <property type="evidence" value="ECO:0000315"/>
    <property type="project" value="ARUK-UCL"/>
</dbReference>
<dbReference type="GO" id="GO:0006355">
    <property type="term" value="P:regulation of DNA-templated transcription"/>
    <property type="evidence" value="ECO:0000266"/>
    <property type="project" value="RGD"/>
</dbReference>
<dbReference type="GO" id="GO:0045995">
    <property type="term" value="P:regulation of embryonic development"/>
    <property type="evidence" value="ECO:0000266"/>
    <property type="project" value="RGD"/>
</dbReference>
<dbReference type="GO" id="GO:2000194">
    <property type="term" value="P:regulation of female gonad development"/>
    <property type="evidence" value="ECO:0000266"/>
    <property type="project" value="RGD"/>
</dbReference>
<dbReference type="GO" id="GO:0006111">
    <property type="term" value="P:regulation of gluconeogenesis"/>
    <property type="evidence" value="ECO:0000270"/>
    <property type="project" value="RGD"/>
</dbReference>
<dbReference type="GO" id="GO:0010310">
    <property type="term" value="P:regulation of hydrogen peroxide metabolic process"/>
    <property type="evidence" value="ECO:0000314"/>
    <property type="project" value="RGD"/>
</dbReference>
<dbReference type="GO" id="GO:0014823">
    <property type="term" value="P:response to activity"/>
    <property type="evidence" value="ECO:0000270"/>
    <property type="project" value="RGD"/>
</dbReference>
<dbReference type="GO" id="GO:0032355">
    <property type="term" value="P:response to estradiol"/>
    <property type="evidence" value="ECO:0000270"/>
    <property type="project" value="RGD"/>
</dbReference>
<dbReference type="GO" id="GO:0045471">
    <property type="term" value="P:response to ethanol"/>
    <property type="evidence" value="ECO:0000270"/>
    <property type="project" value="RGD"/>
</dbReference>
<dbReference type="GO" id="GO:0032094">
    <property type="term" value="P:response to food"/>
    <property type="evidence" value="ECO:0000270"/>
    <property type="project" value="RGD"/>
</dbReference>
<dbReference type="GO" id="GO:0051384">
    <property type="term" value="P:response to glucocorticoid"/>
    <property type="evidence" value="ECO:0000270"/>
    <property type="project" value="RGD"/>
</dbReference>
<dbReference type="GO" id="GO:0009749">
    <property type="term" value="P:response to glucose"/>
    <property type="evidence" value="ECO:0000270"/>
    <property type="project" value="BHF-UCL"/>
</dbReference>
<dbReference type="GO" id="GO:0009725">
    <property type="term" value="P:response to hormone"/>
    <property type="evidence" value="ECO:0000270"/>
    <property type="project" value="RGD"/>
</dbReference>
<dbReference type="GO" id="GO:0001666">
    <property type="term" value="P:response to hypoxia"/>
    <property type="evidence" value="ECO:0000270"/>
    <property type="project" value="RGD"/>
</dbReference>
<dbReference type="GO" id="GO:0032868">
    <property type="term" value="P:response to insulin"/>
    <property type="evidence" value="ECO:0000270"/>
    <property type="project" value="BHF-UCL"/>
</dbReference>
<dbReference type="GO" id="GO:0010042">
    <property type="term" value="P:response to manganese ion"/>
    <property type="evidence" value="ECO:0000270"/>
    <property type="project" value="RGD"/>
</dbReference>
<dbReference type="GO" id="GO:0031667">
    <property type="term" value="P:response to nutrient levels"/>
    <property type="evidence" value="ECO:0000314"/>
    <property type="project" value="RGD"/>
</dbReference>
<dbReference type="GO" id="GO:1904638">
    <property type="term" value="P:response to resveratrol"/>
    <property type="evidence" value="ECO:0000270"/>
    <property type="project" value="RGD"/>
</dbReference>
<dbReference type="GO" id="GO:0042594">
    <property type="term" value="P:response to starvation"/>
    <property type="evidence" value="ECO:0000270"/>
    <property type="project" value="RGD"/>
</dbReference>
<dbReference type="GO" id="GO:0033574">
    <property type="term" value="P:response to testosterone"/>
    <property type="evidence" value="ECO:0000270"/>
    <property type="project" value="RGD"/>
</dbReference>
<dbReference type="GO" id="GO:0034612">
    <property type="term" value="P:response to tumor necrosis factor"/>
    <property type="evidence" value="ECO:0000315"/>
    <property type="project" value="RGD"/>
</dbReference>
<dbReference type="GO" id="GO:1902438">
    <property type="term" value="P:response to vanadate(3-)"/>
    <property type="evidence" value="ECO:0000270"/>
    <property type="project" value="RGD"/>
</dbReference>
<dbReference type="GO" id="GO:0033280">
    <property type="term" value="P:response to vitamin D"/>
    <property type="evidence" value="ECO:0000270"/>
    <property type="project" value="RGD"/>
</dbReference>
<dbReference type="GO" id="GO:0046718">
    <property type="term" value="P:symbiont entry into host cell"/>
    <property type="evidence" value="ECO:0000266"/>
    <property type="project" value="RGD"/>
</dbReference>
<dbReference type="CDD" id="cd00063">
    <property type="entry name" value="FN3"/>
    <property type="match status" value="2"/>
</dbReference>
<dbReference type="CDD" id="cd00064">
    <property type="entry name" value="FU"/>
    <property type="match status" value="1"/>
</dbReference>
<dbReference type="CDD" id="cd05061">
    <property type="entry name" value="PTKc_InsR"/>
    <property type="match status" value="1"/>
</dbReference>
<dbReference type="FunFam" id="1.10.510.10:FF:000050">
    <property type="entry name" value="Tyrosine-protein kinase receptor"/>
    <property type="match status" value="1"/>
</dbReference>
<dbReference type="FunFam" id="2.10.220.10:FF:000005">
    <property type="entry name" value="Tyrosine-protein kinase receptor"/>
    <property type="match status" value="1"/>
</dbReference>
<dbReference type="FunFam" id="2.60.40.10:FF:000087">
    <property type="entry name" value="Tyrosine-protein kinase receptor"/>
    <property type="match status" value="1"/>
</dbReference>
<dbReference type="FunFam" id="2.60.40.10:FF:000108">
    <property type="entry name" value="Tyrosine-protein kinase receptor"/>
    <property type="match status" value="1"/>
</dbReference>
<dbReference type="FunFam" id="2.60.40.10:FF:001010">
    <property type="entry name" value="Tyrosine-protein kinase receptor"/>
    <property type="match status" value="1"/>
</dbReference>
<dbReference type="FunFam" id="3.30.200.20:FF:000026">
    <property type="entry name" value="Tyrosine-protein kinase receptor"/>
    <property type="match status" value="1"/>
</dbReference>
<dbReference type="FunFam" id="3.80.20.20:FF:000001">
    <property type="entry name" value="Tyrosine-protein kinase receptor"/>
    <property type="match status" value="1"/>
</dbReference>
<dbReference type="FunFam" id="3.80.20.20:FF:000002">
    <property type="entry name" value="Tyrosine-protein kinase receptor"/>
    <property type="match status" value="1"/>
</dbReference>
<dbReference type="Gene3D" id="2.10.220.10">
    <property type="entry name" value="Hormone Receptor, Insulin-like Growth Factor Receptor 1, Chain A, domain 2"/>
    <property type="match status" value="1"/>
</dbReference>
<dbReference type="Gene3D" id="2.60.40.10">
    <property type="entry name" value="Immunoglobulins"/>
    <property type="match status" value="4"/>
</dbReference>
<dbReference type="Gene3D" id="3.30.200.20">
    <property type="entry name" value="Phosphorylase Kinase, domain 1"/>
    <property type="match status" value="1"/>
</dbReference>
<dbReference type="Gene3D" id="3.80.20.20">
    <property type="entry name" value="Receptor L-domain"/>
    <property type="match status" value="2"/>
</dbReference>
<dbReference type="Gene3D" id="1.10.510.10">
    <property type="entry name" value="Transferase(Phosphotransferase) domain 1"/>
    <property type="match status" value="1"/>
</dbReference>
<dbReference type="InterPro" id="IPR003961">
    <property type="entry name" value="FN3_dom"/>
</dbReference>
<dbReference type="InterPro" id="IPR036116">
    <property type="entry name" value="FN3_sf"/>
</dbReference>
<dbReference type="InterPro" id="IPR006211">
    <property type="entry name" value="Furin-like_Cys-rich_dom"/>
</dbReference>
<dbReference type="InterPro" id="IPR006212">
    <property type="entry name" value="Furin_repeat"/>
</dbReference>
<dbReference type="InterPro" id="IPR009030">
    <property type="entry name" value="Growth_fac_rcpt_cys_sf"/>
</dbReference>
<dbReference type="InterPro" id="IPR013783">
    <property type="entry name" value="Ig-like_fold"/>
</dbReference>
<dbReference type="InterPro" id="IPR040969">
    <property type="entry name" value="Insulin_TMD"/>
</dbReference>
<dbReference type="InterPro" id="IPR011009">
    <property type="entry name" value="Kinase-like_dom_sf"/>
</dbReference>
<dbReference type="InterPro" id="IPR000719">
    <property type="entry name" value="Prot_kinase_dom"/>
</dbReference>
<dbReference type="InterPro" id="IPR017441">
    <property type="entry name" value="Protein_kinase_ATP_BS"/>
</dbReference>
<dbReference type="InterPro" id="IPR000494">
    <property type="entry name" value="Rcpt_L-dom"/>
</dbReference>
<dbReference type="InterPro" id="IPR036941">
    <property type="entry name" value="Rcpt_L-dom_sf"/>
</dbReference>
<dbReference type="InterPro" id="IPR050122">
    <property type="entry name" value="RTK"/>
</dbReference>
<dbReference type="InterPro" id="IPR001245">
    <property type="entry name" value="Ser-Thr/Tyr_kinase_cat_dom"/>
</dbReference>
<dbReference type="InterPro" id="IPR008266">
    <property type="entry name" value="Tyr_kinase_AS"/>
</dbReference>
<dbReference type="InterPro" id="IPR020635">
    <property type="entry name" value="Tyr_kinase_cat_dom"/>
</dbReference>
<dbReference type="InterPro" id="IPR016246">
    <property type="entry name" value="Tyr_kinase_insulin-like_rcpt"/>
</dbReference>
<dbReference type="InterPro" id="IPR002011">
    <property type="entry name" value="Tyr_kinase_rcpt_2_CS"/>
</dbReference>
<dbReference type="PANTHER" id="PTHR24416:SF535">
    <property type="entry name" value="INSULIN RECEPTOR"/>
    <property type="match status" value="1"/>
</dbReference>
<dbReference type="PANTHER" id="PTHR24416">
    <property type="entry name" value="TYROSINE-PROTEIN KINASE RECEPTOR"/>
    <property type="match status" value="1"/>
</dbReference>
<dbReference type="Pfam" id="PF00041">
    <property type="entry name" value="fn3"/>
    <property type="match status" value="1"/>
</dbReference>
<dbReference type="Pfam" id="PF00757">
    <property type="entry name" value="Furin-like"/>
    <property type="match status" value="1"/>
</dbReference>
<dbReference type="Pfam" id="PF17870">
    <property type="entry name" value="Insulin_TMD"/>
    <property type="match status" value="1"/>
</dbReference>
<dbReference type="Pfam" id="PF07714">
    <property type="entry name" value="PK_Tyr_Ser-Thr"/>
    <property type="match status" value="1"/>
</dbReference>
<dbReference type="Pfam" id="PF01030">
    <property type="entry name" value="Recep_L_domain"/>
    <property type="match status" value="2"/>
</dbReference>
<dbReference type="PIRSF" id="PIRSF000620">
    <property type="entry name" value="Insulin_receptor"/>
    <property type="match status" value="1"/>
</dbReference>
<dbReference type="PRINTS" id="PR00109">
    <property type="entry name" value="TYRKINASE"/>
</dbReference>
<dbReference type="SMART" id="SM00060">
    <property type="entry name" value="FN3"/>
    <property type="match status" value="3"/>
</dbReference>
<dbReference type="SMART" id="SM00261">
    <property type="entry name" value="FU"/>
    <property type="match status" value="1"/>
</dbReference>
<dbReference type="SMART" id="SM00219">
    <property type="entry name" value="TyrKc"/>
    <property type="match status" value="1"/>
</dbReference>
<dbReference type="SUPFAM" id="SSF49265">
    <property type="entry name" value="Fibronectin type III"/>
    <property type="match status" value="3"/>
</dbReference>
<dbReference type="SUPFAM" id="SSF57184">
    <property type="entry name" value="Growth factor receptor domain"/>
    <property type="match status" value="1"/>
</dbReference>
<dbReference type="SUPFAM" id="SSF52058">
    <property type="entry name" value="L domain-like"/>
    <property type="match status" value="2"/>
</dbReference>
<dbReference type="SUPFAM" id="SSF56112">
    <property type="entry name" value="Protein kinase-like (PK-like)"/>
    <property type="match status" value="1"/>
</dbReference>
<dbReference type="PROSITE" id="PS50853">
    <property type="entry name" value="FN3"/>
    <property type="match status" value="3"/>
</dbReference>
<dbReference type="PROSITE" id="PS00107">
    <property type="entry name" value="PROTEIN_KINASE_ATP"/>
    <property type="match status" value="1"/>
</dbReference>
<dbReference type="PROSITE" id="PS50011">
    <property type="entry name" value="PROTEIN_KINASE_DOM"/>
    <property type="match status" value="1"/>
</dbReference>
<dbReference type="PROSITE" id="PS00109">
    <property type="entry name" value="PROTEIN_KINASE_TYR"/>
    <property type="match status" value="1"/>
</dbReference>
<dbReference type="PROSITE" id="PS00239">
    <property type="entry name" value="RECEPTOR_TYR_KIN_II"/>
    <property type="match status" value="1"/>
</dbReference>
<feature type="signal peptide">
    <location>
        <begin position="1"/>
        <end position="26"/>
    </location>
</feature>
<feature type="chain" id="PRO_0000016696" description="Insulin receptor subunit alpha">
    <location>
        <begin position="27"/>
        <end position="759"/>
    </location>
</feature>
<feature type="chain" id="PRO_0000016698" description="Insulin receptor subunit beta">
    <location>
        <begin position="764"/>
        <end position="1383"/>
    </location>
</feature>
<feature type="topological domain" description="Extracellular" evidence="14">
    <location>
        <begin position="27"/>
        <end position="759"/>
    </location>
</feature>
<feature type="topological domain" description="Extracellular" evidence="14">
    <location>
        <begin position="764"/>
        <end position="957"/>
    </location>
</feature>
<feature type="transmembrane region" description="Helical" evidence="4">
    <location>
        <begin position="958"/>
        <end position="978"/>
    </location>
</feature>
<feature type="topological domain" description="Cytoplasmic" evidence="14">
    <location>
        <begin position="979"/>
        <end position="1383"/>
    </location>
</feature>
<feature type="domain" description="Fibronectin type-III 1" evidence="6">
    <location>
        <begin position="625"/>
        <end position="727"/>
    </location>
</feature>
<feature type="domain" description="Fibronectin type-III 2" evidence="6">
    <location>
        <begin position="754"/>
        <end position="848"/>
    </location>
</feature>
<feature type="domain" description="Fibronectin type-III 3" evidence="6">
    <location>
        <begin position="854"/>
        <end position="948"/>
    </location>
</feature>
<feature type="domain" description="Protein kinase" evidence="5">
    <location>
        <begin position="1024"/>
        <end position="1299"/>
    </location>
</feature>
<feature type="region of interest" description="Disordered" evidence="8">
    <location>
        <begin position="687"/>
        <end position="709"/>
    </location>
</feature>
<feature type="region of interest" description="Insulin-binding" evidence="1">
    <location>
        <begin position="734"/>
        <end position="742"/>
    </location>
</feature>
<feature type="region of interest" description="Disordered" evidence="8">
    <location>
        <begin position="747"/>
        <end position="783"/>
    </location>
</feature>
<feature type="region of interest" description="Important for interaction with IRS1, SHC1 and STAT5B">
    <location>
        <begin position="997"/>
        <end position="1000"/>
    </location>
</feature>
<feature type="region of interest" description="Disordered" evidence="8">
    <location>
        <begin position="1361"/>
        <end position="1383"/>
    </location>
</feature>
<feature type="region of interest" description="PIK3R1 binding" evidence="1">
    <location>
        <begin position="1362"/>
        <end position="1365"/>
    </location>
</feature>
<feature type="compositionally biased region" description="Polar residues" evidence="8">
    <location>
        <begin position="771"/>
        <end position="783"/>
    </location>
</feature>
<feature type="active site" description="Proton donor/acceptor" evidence="1">
    <location>
        <position position="1160"/>
    </location>
</feature>
<feature type="binding site" evidence="5">
    <location>
        <position position="1034"/>
    </location>
    <ligand>
        <name>ATP</name>
        <dbReference type="ChEBI" id="CHEBI:30616"/>
    </ligand>
</feature>
<feature type="binding site" evidence="5">
    <location>
        <position position="1058"/>
    </location>
    <ligand>
        <name>ATP</name>
        <dbReference type="ChEBI" id="CHEBI:30616"/>
    </ligand>
</feature>
<feature type="binding site" evidence="5">
    <location>
        <begin position="1105"/>
        <end position="1111"/>
    </location>
    <ligand>
        <name>ATP</name>
        <dbReference type="ChEBI" id="CHEBI:30616"/>
    </ligand>
</feature>
<feature type="binding site" evidence="5">
    <location>
        <begin position="1164"/>
        <end position="1165"/>
    </location>
    <ligand>
        <name>ATP</name>
        <dbReference type="ChEBI" id="CHEBI:30616"/>
    </ligand>
</feature>
<feature type="binding site" evidence="5">
    <location>
        <position position="1178"/>
    </location>
    <ligand>
        <name>ATP</name>
        <dbReference type="ChEBI" id="CHEBI:30616"/>
    </ligand>
</feature>
<feature type="site" description="Insulin-binding" evidence="1">
    <location>
        <position position="65"/>
    </location>
</feature>
<feature type="modified residue" description="Phosphoserine" evidence="2">
    <location>
        <position position="399"/>
    </location>
</feature>
<feature type="modified residue" description="Phosphotyrosine" evidence="2">
    <location>
        <position position="400"/>
    </location>
</feature>
<feature type="modified residue" description="Phosphoserine" evidence="2">
    <location>
        <position position="406"/>
    </location>
</feature>
<feature type="modified residue" description="Phosphotyrosine; by autocatalysis" evidence="2">
    <location>
        <position position="1000"/>
    </location>
</feature>
<feature type="modified residue" description="S-nitrosocysteine" evidence="2">
    <location>
        <position position="1084"/>
    </location>
</feature>
<feature type="modified residue" description="Phosphotyrosine; by autocatalysis" evidence="2">
    <location>
        <position position="1186"/>
    </location>
</feature>
<feature type="modified residue" description="Phosphotyrosine; by autocatalysis" evidence="2">
    <location>
        <position position="1190"/>
    </location>
</feature>
<feature type="modified residue" description="Phosphotyrosine; by autocatalysis" evidence="2">
    <location>
        <position position="1191"/>
    </location>
</feature>
<feature type="modified residue" description="Phosphotyrosine; by autocatalysis" evidence="2">
    <location>
        <position position="1356"/>
    </location>
</feature>
<feature type="modified residue" description="Phosphotyrosine; by autocatalysis" evidence="2">
    <location>
        <position position="1362"/>
    </location>
</feature>
<feature type="glycosylation site" description="N-linked (GlcNAc...) asparagine" evidence="4">
    <location>
        <position position="42"/>
    </location>
</feature>
<feature type="glycosylation site" description="N-linked (GlcNAc...) asparagine" evidence="4">
    <location>
        <position position="51"/>
    </location>
</feature>
<feature type="glycosylation site" description="N-linked (GlcNAc...) asparagine" evidence="4">
    <location>
        <position position="104"/>
    </location>
</feature>
<feature type="glycosylation site" description="N-linked (GlcNAc...) asparagine" evidence="4">
    <location>
        <position position="137"/>
    </location>
</feature>
<feature type="glycosylation site" description="N-linked (GlcNAc...) asparagine" evidence="4">
    <location>
        <position position="241"/>
    </location>
</feature>
<feature type="glycosylation site" description="N-linked (GlcNAc...) asparagine" evidence="4">
    <location>
        <position position="281"/>
    </location>
</feature>
<feature type="glycosylation site" description="N-linked (GlcNAc...) asparagine" evidence="4">
    <location>
        <position position="321"/>
    </location>
</feature>
<feature type="glycosylation site" description="N-linked (GlcNAc...) asparagine" evidence="4">
    <location>
        <position position="363"/>
    </location>
</feature>
<feature type="glycosylation site" description="N-linked (GlcNAc...) asparagine" evidence="4">
    <location>
        <position position="423"/>
    </location>
</feature>
<feature type="glycosylation site" description="N-linked (GlcNAc...) asparagine" evidence="4">
    <location>
        <position position="444"/>
    </location>
</feature>
<feature type="glycosylation site" description="N-linked (GlcNAc...) asparagine" evidence="4">
    <location>
        <position position="540"/>
    </location>
</feature>
<feature type="glycosylation site" description="N-linked (GlcNAc...) asparagine" evidence="4">
    <location>
        <position position="634"/>
    </location>
</feature>
<feature type="glycosylation site" description="N-linked (GlcNAc...) asparagine" evidence="4">
    <location>
        <position position="652"/>
    </location>
</feature>
<feature type="glycosylation site" description="N-linked (GlcNAc...) asparagine" evidence="4">
    <location>
        <position position="699"/>
    </location>
</feature>
<feature type="glycosylation site" description="N-linked (GlcNAc...) asparagine" evidence="4">
    <location>
        <position position="770"/>
    </location>
</feature>
<feature type="glycosylation site" description="N-linked (GlcNAc...) asparagine" evidence="4">
    <location>
        <position position="783"/>
    </location>
</feature>
<feature type="glycosylation site" description="N-linked (GlcNAc...) asparagine" evidence="4">
    <location>
        <position position="921"/>
    </location>
</feature>
<feature type="glycosylation site" description="N-linked (GlcNAc...) asparagine" evidence="4">
    <location>
        <position position="934"/>
    </location>
</feature>
<feature type="disulfide bond" evidence="1">
    <location>
        <begin position="34"/>
        <end position="52"/>
    </location>
</feature>
<feature type="disulfide bond" evidence="1">
    <location>
        <begin position="152"/>
        <end position="181"/>
    </location>
</feature>
<feature type="disulfide bond" evidence="1">
    <location>
        <begin position="185"/>
        <end position="208"/>
    </location>
</feature>
<feature type="disulfide bond" evidence="1">
    <location>
        <begin position="195"/>
        <end position="214"/>
    </location>
</feature>
<feature type="disulfide bond" evidence="1">
    <location>
        <begin position="218"/>
        <end position="227"/>
    </location>
</feature>
<feature type="disulfide bond" evidence="1">
    <location>
        <begin position="222"/>
        <end position="233"/>
    </location>
</feature>
<feature type="disulfide bond" evidence="1">
    <location>
        <begin position="234"/>
        <end position="242"/>
    </location>
</feature>
<feature type="disulfide bond" evidence="1">
    <location>
        <begin position="238"/>
        <end position="251"/>
    </location>
</feature>
<feature type="disulfide bond" evidence="1">
    <location>
        <begin position="254"/>
        <end position="263"/>
    </location>
</feature>
<feature type="disulfide bond" evidence="1">
    <location>
        <begin position="267"/>
        <end position="279"/>
    </location>
</feature>
<feature type="disulfide bond" evidence="1">
    <location>
        <begin position="285"/>
        <end position="310"/>
    </location>
</feature>
<feature type="disulfide bond" evidence="1">
    <location>
        <begin position="292"/>
        <end position="300"/>
    </location>
</feature>
<feature type="disulfide bond" evidence="1">
    <location>
        <begin position="314"/>
        <end position="327"/>
    </location>
</feature>
<feature type="disulfide bond" evidence="1">
    <location>
        <begin position="330"/>
        <end position="334"/>
    </location>
</feature>
<feature type="disulfide bond" evidence="1">
    <location>
        <begin position="338"/>
        <end position="359"/>
    </location>
</feature>
<feature type="disulfide bond" evidence="1">
    <location>
        <begin position="461"/>
        <end position="494"/>
    </location>
</feature>
<feature type="disulfide bond" description="Interchain" evidence="1">
    <location>
        <position position="550"/>
    </location>
</feature>
<feature type="disulfide bond" evidence="1">
    <location>
        <begin position="675"/>
        <end position="900"/>
    </location>
</feature>
<feature type="cross-link" description="Glycyl lysine isopeptide (Lys-Gly) (interchain with G-Cter in ubiquitin)" evidence="2">
    <location>
        <position position="1080"/>
    </location>
</feature>
<feature type="splice variant" id="VSP_036680" description="In isoform Short." evidence="14">
    <location>
        <begin position="746"/>
        <end position="757"/>
    </location>
</feature>
<feature type="helix" evidence="15">
    <location>
        <begin position="727"/>
        <end position="736"/>
    </location>
</feature>
<protein>
    <recommendedName>
        <fullName>Insulin receptor</fullName>
        <shortName>IR</shortName>
        <ecNumber>2.7.10.1</ecNumber>
    </recommendedName>
    <cdAntigenName>CD220</cdAntigenName>
    <component>
        <recommendedName>
            <fullName>Insulin receptor subunit alpha</fullName>
        </recommendedName>
    </component>
    <component>
        <recommendedName>
            <fullName>Insulin receptor subunit beta</fullName>
        </recommendedName>
    </component>
</protein>